<evidence type="ECO:0000255" key="1">
    <source>
        <dbReference type="HAMAP-Rule" id="MF_01217"/>
    </source>
</evidence>
<evidence type="ECO:0000255" key="2">
    <source>
        <dbReference type="PROSITE-ProRule" id="PRU00258"/>
    </source>
</evidence>
<dbReference type="EMBL" id="CP000683">
    <property type="protein sequence ID" value="ABV85188.1"/>
    <property type="molecule type" value="Genomic_DNA"/>
</dbReference>
<dbReference type="BMRB" id="A8F2Q2"/>
<dbReference type="SMR" id="A8F2Q2"/>
<dbReference type="KEGG" id="rms:RMA_1205"/>
<dbReference type="HOGENOM" id="CLU_108696_5_6_5"/>
<dbReference type="UniPathway" id="UPA00094"/>
<dbReference type="Proteomes" id="UP000001311">
    <property type="component" value="Chromosome"/>
</dbReference>
<dbReference type="GO" id="GO:0005829">
    <property type="term" value="C:cytosol"/>
    <property type="evidence" value="ECO:0007669"/>
    <property type="project" value="TreeGrafter"/>
</dbReference>
<dbReference type="GO" id="GO:0016020">
    <property type="term" value="C:membrane"/>
    <property type="evidence" value="ECO:0007669"/>
    <property type="project" value="GOC"/>
</dbReference>
<dbReference type="GO" id="GO:0000035">
    <property type="term" value="F:acyl binding"/>
    <property type="evidence" value="ECO:0007669"/>
    <property type="project" value="TreeGrafter"/>
</dbReference>
<dbReference type="GO" id="GO:0000036">
    <property type="term" value="F:acyl carrier activity"/>
    <property type="evidence" value="ECO:0007669"/>
    <property type="project" value="UniProtKB-UniRule"/>
</dbReference>
<dbReference type="GO" id="GO:0009245">
    <property type="term" value="P:lipid A biosynthetic process"/>
    <property type="evidence" value="ECO:0007669"/>
    <property type="project" value="TreeGrafter"/>
</dbReference>
<dbReference type="Gene3D" id="1.10.1200.10">
    <property type="entry name" value="ACP-like"/>
    <property type="match status" value="1"/>
</dbReference>
<dbReference type="HAMAP" id="MF_01217">
    <property type="entry name" value="Acyl_carrier"/>
    <property type="match status" value="1"/>
</dbReference>
<dbReference type="InterPro" id="IPR003231">
    <property type="entry name" value="ACP"/>
</dbReference>
<dbReference type="InterPro" id="IPR036736">
    <property type="entry name" value="ACP-like_sf"/>
</dbReference>
<dbReference type="InterPro" id="IPR009081">
    <property type="entry name" value="PP-bd_ACP"/>
</dbReference>
<dbReference type="NCBIfam" id="TIGR00517">
    <property type="entry name" value="acyl_carrier"/>
    <property type="match status" value="1"/>
</dbReference>
<dbReference type="NCBIfam" id="NF002148">
    <property type="entry name" value="PRK00982.1-2"/>
    <property type="match status" value="1"/>
</dbReference>
<dbReference type="NCBIfam" id="NF002150">
    <property type="entry name" value="PRK00982.1-4"/>
    <property type="match status" value="1"/>
</dbReference>
<dbReference type="PANTHER" id="PTHR20863">
    <property type="entry name" value="ACYL CARRIER PROTEIN"/>
    <property type="match status" value="1"/>
</dbReference>
<dbReference type="PANTHER" id="PTHR20863:SF76">
    <property type="entry name" value="CARRIER DOMAIN-CONTAINING PROTEIN"/>
    <property type="match status" value="1"/>
</dbReference>
<dbReference type="Pfam" id="PF00550">
    <property type="entry name" value="PP-binding"/>
    <property type="match status" value="1"/>
</dbReference>
<dbReference type="SUPFAM" id="SSF47336">
    <property type="entry name" value="ACP-like"/>
    <property type="match status" value="1"/>
</dbReference>
<dbReference type="PROSITE" id="PS50075">
    <property type="entry name" value="CARRIER"/>
    <property type="match status" value="1"/>
</dbReference>
<organism>
    <name type="scientific">Rickettsia massiliae (strain Mtu5)</name>
    <dbReference type="NCBI Taxonomy" id="416276"/>
    <lineage>
        <taxon>Bacteria</taxon>
        <taxon>Pseudomonadati</taxon>
        <taxon>Pseudomonadota</taxon>
        <taxon>Alphaproteobacteria</taxon>
        <taxon>Rickettsiales</taxon>
        <taxon>Rickettsiaceae</taxon>
        <taxon>Rickettsieae</taxon>
        <taxon>Rickettsia</taxon>
        <taxon>spotted fever group</taxon>
    </lineage>
</organism>
<sequence length="86" mass="9903">MEFKIMSTTDKIEQKVIEMVAEKLNKDKSIITTDSRFIEDLKADSLDTVELMMAIEVEYGIDIPDDEATKIKTVSDVIKYIKERQS</sequence>
<keyword id="KW-0963">Cytoplasm</keyword>
<keyword id="KW-0275">Fatty acid biosynthesis</keyword>
<keyword id="KW-0276">Fatty acid metabolism</keyword>
<keyword id="KW-0444">Lipid biosynthesis</keyword>
<keyword id="KW-0443">Lipid metabolism</keyword>
<keyword id="KW-0596">Phosphopantetheine</keyword>
<keyword id="KW-0597">Phosphoprotein</keyword>
<accession>A8F2Q2</accession>
<protein>
    <recommendedName>
        <fullName evidence="1">Acyl carrier protein</fullName>
        <shortName evidence="1">ACP</shortName>
    </recommendedName>
</protein>
<feature type="chain" id="PRO_1000066681" description="Acyl carrier protein">
    <location>
        <begin position="1"/>
        <end position="86"/>
    </location>
</feature>
<feature type="domain" description="Carrier" evidence="2">
    <location>
        <begin position="10"/>
        <end position="85"/>
    </location>
</feature>
<feature type="modified residue" description="O-(pantetheine 4'-phosphoryl)serine" evidence="2">
    <location>
        <position position="45"/>
    </location>
</feature>
<comment type="function">
    <text evidence="1">Carrier of the growing fatty acid chain in fatty acid biosynthesis.</text>
</comment>
<comment type="pathway">
    <text evidence="1">Lipid metabolism; fatty acid biosynthesis.</text>
</comment>
<comment type="subcellular location">
    <subcellularLocation>
        <location evidence="1">Cytoplasm</location>
    </subcellularLocation>
</comment>
<comment type="PTM">
    <text evidence="1">4'-phosphopantetheine is transferred from CoA to a specific serine of apo-ACP by AcpS. This modification is essential for activity because fatty acids are bound in thioester linkage to the sulfhydryl of the prosthetic group.</text>
</comment>
<comment type="similarity">
    <text evidence="1">Belongs to the acyl carrier protein (ACP) family.</text>
</comment>
<reference key="1">
    <citation type="journal article" date="2007" name="Genome Res.">
        <title>Lateral gene transfer between obligate intracellular bacteria: evidence from the Rickettsia massiliae genome.</title>
        <authorList>
            <person name="Blanc G."/>
            <person name="Ogata H."/>
            <person name="Robert C."/>
            <person name="Audic S."/>
            <person name="Claverie J.-M."/>
            <person name="Raoult D."/>
        </authorList>
    </citation>
    <scope>NUCLEOTIDE SEQUENCE [LARGE SCALE GENOMIC DNA]</scope>
    <source>
        <strain>Mtu5</strain>
    </source>
</reference>
<proteinExistence type="inferred from homology"/>
<name>ACP_RICM5</name>
<gene>
    <name evidence="1" type="primary">acpP</name>
    <name type="ordered locus">RMA_1205</name>
</gene>